<sequence>MAAGKFASLPRNMPVNHQFPLASSMDLLSSKSPLTEHRPDAYQDVSIHGTLPRKKKGPPPIRSCDDFSHMGTLPHSKSPQQNSPVTQDSIQESPWQDRHCETFTFRDPHLLDPTLEYVKFSKERHIMDRTPEKLKKELEEELLLSSEDLRSHAWYHGRIPRQVSENLVQRDGDFLVRDSLSSPGNFVLTCQWKNLAQHFKINRTVLRLSEAYSRVQYQFEMESFDSIPGLVRCYVGNRRPISQQSGAIIFQPINRTVPLRCLEERYGISPGQAREGSLTEGRPDVTKRLSLTMGGVQAREQNLPRGNLLRNKEKSGSQPACLDHMQDRRALSLKAHQSESYLPIGCKLPPQSSGVDTSPCPNSPVFRTGSEPALSPAVVRRVSSDARAGEALRGSDSQLCPKPPPKPCKVPFLKAPSSPSAWLNSEANYCELNPAFATGCGRGAKLPLCAQGSPTELLTAKQNGALGPRNSGINYLILDDDDRERPWEPAAAQTEKGQWDKGEFVAPLLETVSSFRPNDFKSKFLPPENKPLETAMLKRAKELFTNNDPKVIAQHILSMDCRVARILEVSEEMRRNMGVSSGLELITLPHGHQLRLDIIERHSTMAIGIAVYILGCTGTLEDRAATLSKVIQVAVELKDSMGDLYSFSALMKALEMPQITRLEKTWTALRHQYTQTAILYEKQLKPFSKILHEGRESTCVPPNNVSVPLLMPLVTLMERQAVTFEGTDMWEKNDQSCEIMLNHLATARLMAEATDSYRMNAERILAGFQPDEEMNEICKTEFQMRLLWGSKGAQVNQAERYEKFNQILTALSRKLEPPPVKQAEL</sequence>
<name>BCAR3_MACFA</name>
<keyword id="KW-0007">Acetylation</keyword>
<keyword id="KW-0965">Cell junction</keyword>
<keyword id="KW-0963">Cytoplasm</keyword>
<keyword id="KW-0344">Guanine-nucleotide releasing factor</keyword>
<keyword id="KW-0488">Methylation</keyword>
<keyword id="KW-0597">Phosphoprotein</keyword>
<keyword id="KW-1185">Reference proteome</keyword>
<keyword id="KW-0727">SH2 domain</keyword>
<dbReference type="EMBL" id="AB168388">
    <property type="protein sequence ID" value="BAE00510.1"/>
    <property type="status" value="ALT_INIT"/>
    <property type="molecule type" value="mRNA"/>
</dbReference>
<dbReference type="RefSeq" id="NP_001272015.1">
    <property type="nucleotide sequence ID" value="NM_001285086.1"/>
</dbReference>
<dbReference type="SMR" id="Q4R8R1"/>
<dbReference type="STRING" id="9541.ENSMFAP00000028251"/>
<dbReference type="eggNOG" id="ENOG502QPX3">
    <property type="taxonomic scope" value="Eukaryota"/>
</dbReference>
<dbReference type="Proteomes" id="UP000233100">
    <property type="component" value="Unplaced"/>
</dbReference>
<dbReference type="GO" id="GO:0005737">
    <property type="term" value="C:cytoplasm"/>
    <property type="evidence" value="ECO:0007669"/>
    <property type="project" value="UniProtKB-SubCell"/>
</dbReference>
<dbReference type="GO" id="GO:0005925">
    <property type="term" value="C:focal adhesion"/>
    <property type="evidence" value="ECO:0000250"/>
    <property type="project" value="UniProtKB"/>
</dbReference>
<dbReference type="GO" id="GO:0016020">
    <property type="term" value="C:membrane"/>
    <property type="evidence" value="ECO:0000250"/>
    <property type="project" value="UniProtKB"/>
</dbReference>
<dbReference type="GO" id="GO:0005085">
    <property type="term" value="F:guanyl-nucleotide exchange factor activity"/>
    <property type="evidence" value="ECO:0007669"/>
    <property type="project" value="UniProtKB-KW"/>
</dbReference>
<dbReference type="GO" id="GO:0001784">
    <property type="term" value="F:phosphotyrosine residue binding"/>
    <property type="evidence" value="ECO:0000250"/>
    <property type="project" value="UniProtKB"/>
</dbReference>
<dbReference type="GO" id="GO:0086100">
    <property type="term" value="P:endothelin receptor signaling pathway"/>
    <property type="evidence" value="ECO:0000250"/>
    <property type="project" value="UniProtKB"/>
</dbReference>
<dbReference type="GO" id="GO:0007173">
    <property type="term" value="P:epidermal growth factor receptor signaling pathway"/>
    <property type="evidence" value="ECO:0000250"/>
    <property type="project" value="UniProtKB"/>
</dbReference>
<dbReference type="GO" id="GO:0008286">
    <property type="term" value="P:insulin receptor signaling pathway"/>
    <property type="evidence" value="ECO:0000250"/>
    <property type="project" value="UniProtKB"/>
</dbReference>
<dbReference type="GO" id="GO:0008284">
    <property type="term" value="P:positive regulation of cell population proliferation"/>
    <property type="evidence" value="ECO:0000250"/>
    <property type="project" value="UniProtKB"/>
</dbReference>
<dbReference type="GO" id="GO:0043547">
    <property type="term" value="P:positive regulation of GTPase activity"/>
    <property type="evidence" value="ECO:0000250"/>
    <property type="project" value="UniProtKB"/>
</dbReference>
<dbReference type="GO" id="GO:0043410">
    <property type="term" value="P:positive regulation of MAPK cascade"/>
    <property type="evidence" value="ECO:0000250"/>
    <property type="project" value="UniProtKB"/>
</dbReference>
<dbReference type="GO" id="GO:0007264">
    <property type="term" value="P:small GTPase-mediated signal transduction"/>
    <property type="evidence" value="ECO:0007669"/>
    <property type="project" value="InterPro"/>
</dbReference>
<dbReference type="CDD" id="cd10337">
    <property type="entry name" value="SH2_BCAR3"/>
    <property type="match status" value="1"/>
</dbReference>
<dbReference type="FunFam" id="1.10.840.10:FF:000007">
    <property type="entry name" value="SH2 domain containing 3C (Predicted)"/>
    <property type="match status" value="1"/>
</dbReference>
<dbReference type="FunFam" id="3.30.505.10:FF:000013">
    <property type="entry name" value="SH2 domain-containing protein 3C isoform X1"/>
    <property type="match status" value="1"/>
</dbReference>
<dbReference type="Gene3D" id="1.10.840.10">
    <property type="entry name" value="Ras guanine-nucleotide exchange factors catalytic domain"/>
    <property type="match status" value="1"/>
</dbReference>
<dbReference type="Gene3D" id="3.30.505.10">
    <property type="entry name" value="SH2 domain"/>
    <property type="match status" value="1"/>
</dbReference>
<dbReference type="InterPro" id="IPR023578">
    <property type="entry name" value="Ras_GEF_dom_sf"/>
</dbReference>
<dbReference type="InterPro" id="IPR001895">
    <property type="entry name" value="RASGEF_cat_dom"/>
</dbReference>
<dbReference type="InterPro" id="IPR036964">
    <property type="entry name" value="RASGEF_cat_dom_sf"/>
</dbReference>
<dbReference type="InterPro" id="IPR000980">
    <property type="entry name" value="SH2"/>
</dbReference>
<dbReference type="InterPro" id="IPR051853">
    <property type="entry name" value="SH2-Ras-GEF_adapter"/>
</dbReference>
<dbReference type="InterPro" id="IPR036860">
    <property type="entry name" value="SH2_dom_sf"/>
</dbReference>
<dbReference type="InterPro" id="IPR044102">
    <property type="entry name" value="SH2_SHEP1/BCAR3/NSP1"/>
</dbReference>
<dbReference type="PANTHER" id="PTHR14247:SF10">
    <property type="entry name" value="BREAST CANCER ANTI-ESTROGEN RESISTANCE PROTEIN 3"/>
    <property type="match status" value="1"/>
</dbReference>
<dbReference type="PANTHER" id="PTHR14247">
    <property type="entry name" value="BREAST CANCER ANTI-ESTROGEN RESISTANCE PROTEIN 3 HOMOLOG-LIKE PROTEIN"/>
    <property type="match status" value="1"/>
</dbReference>
<dbReference type="Pfam" id="PF00617">
    <property type="entry name" value="RasGEF"/>
    <property type="match status" value="1"/>
</dbReference>
<dbReference type="Pfam" id="PF00017">
    <property type="entry name" value="SH2"/>
    <property type="match status" value="1"/>
</dbReference>
<dbReference type="SMART" id="SM00147">
    <property type="entry name" value="RasGEF"/>
    <property type="match status" value="1"/>
</dbReference>
<dbReference type="SMART" id="SM00252">
    <property type="entry name" value="SH2"/>
    <property type="match status" value="1"/>
</dbReference>
<dbReference type="SUPFAM" id="SSF48366">
    <property type="entry name" value="Ras GEF"/>
    <property type="match status" value="1"/>
</dbReference>
<dbReference type="SUPFAM" id="SSF55550">
    <property type="entry name" value="SH2 domain"/>
    <property type="match status" value="1"/>
</dbReference>
<dbReference type="PROSITE" id="PS50009">
    <property type="entry name" value="RASGEF_CAT"/>
    <property type="match status" value="1"/>
</dbReference>
<dbReference type="PROSITE" id="PS50001">
    <property type="entry name" value="SH2"/>
    <property type="match status" value="1"/>
</dbReference>
<reference key="1">
    <citation type="submission" date="2005-06" db="EMBL/GenBank/DDBJ databases">
        <title>DNA sequences of macaque genes expressed in brain or testis and its evolutionary implications.</title>
        <authorList>
            <consortium name="International consortium for macaque cDNA sequencing and analysis"/>
        </authorList>
    </citation>
    <scope>NUCLEOTIDE SEQUENCE [LARGE SCALE MRNA]</scope>
    <source>
        <tissue>Testis</tissue>
    </source>
</reference>
<gene>
    <name type="primary">BCAR3</name>
    <name type="ORF">QtsA-11767</name>
</gene>
<evidence type="ECO:0000250" key="1">
    <source>
        <dbReference type="UniProtKB" id="D3ZAZ5"/>
    </source>
</evidence>
<evidence type="ECO:0000250" key="2">
    <source>
        <dbReference type="UniProtKB" id="O75815"/>
    </source>
</evidence>
<evidence type="ECO:0000250" key="3">
    <source>
        <dbReference type="UniProtKB" id="Q9QZK2"/>
    </source>
</evidence>
<evidence type="ECO:0000255" key="4">
    <source>
        <dbReference type="PROSITE-ProRule" id="PRU00168"/>
    </source>
</evidence>
<evidence type="ECO:0000255" key="5">
    <source>
        <dbReference type="PROSITE-ProRule" id="PRU00191"/>
    </source>
</evidence>
<evidence type="ECO:0000256" key="6">
    <source>
        <dbReference type="SAM" id="MobiDB-lite"/>
    </source>
</evidence>
<evidence type="ECO:0000305" key="7"/>
<protein>
    <recommendedName>
        <fullName>Breast cancer anti-estrogen resistance protein 3 homolog</fullName>
    </recommendedName>
</protein>
<comment type="function">
    <text evidence="1 2 3">Acts as an adapter protein downstream of several growth factor receptors to promote cell proliferation, migration, and redistribution of actin fibers (By similarity). Specifically involved in INS/insulin signaling pathway by mediating MAPK1/ERK2-MAPK3/ERK1 activation and DNA synthesis (By similarity). Promotes insulin-mediated membrane ruffling (By similarity). In response to vasoconstrictor peptide EDN1, involved in the activation of RAP1 downstream of PTK2B via interaction with phosphorylated BCAR1. Inhibits cell migration and invasion via regulation of TGFB-mediated matrix digestion, actin filament rearrangement, and inhibition of invadopodia activity. May inhibit TGFB-SMAD signaling, via facilitating BCAR1 and SMAD2 and/or SMAD3 interaction (By similarity). Regulates EGF-induced DNA synthesis (By similarity). Required for the maintenance of ocular lens morphology and structural integrity, potentially via regulation of focal adhesion complex signaling. Acts upstream of PTPRA to regulate the localization of BCAR1 and PTPRA to focal adhesions, via regulation of SRC-mediated phosphorylation of PTPRA. Positively regulates integrin-induced tyrosine phosphorylation of BCAR1. Acts as a guanine nucleotide exchange factor (GEF) for small GTPases RALA, RAP1A and RRAS (By similarity). However, in a contrasting study, lacks GEF activity towards RAP1 (By similarity).</text>
</comment>
<comment type="subunit">
    <text evidence="2 3">Part of a complex comprised of PTPRA, BCAR1, BCAR3 (via SH2 domain) and SRC; the formation of the complex is dependent on integrin mediated-tyrosine phosphorylation of PTPRA (By similarity). Within the complex, interacts (via SH2 domain) with PTPRA (when phosphorylated on 'Tyr-798') (By similarity). Interacts (via Ras-GEF domain) with BCAR1 (By similarity). Interacts (via Ras-GEF domain) with NEDD9 (By similarity). Interacts with PTK2/FAK1 (By similarity). Interacts with PTPN1. Interacts (via SH2 domain) with EGFR (when tyrosine-phosphorylated) (By similarity).</text>
</comment>
<comment type="subcellular location">
    <subcellularLocation>
        <location evidence="3">Cytoplasm</location>
    </subcellularLocation>
    <subcellularLocation>
        <location evidence="3">Cell junction</location>
        <location evidence="3">Focal adhesion</location>
    </subcellularLocation>
    <text evidence="3">Localization to focal adhesions depends on interaction with PTPRA.</text>
</comment>
<comment type="domain">
    <text evidence="2 3">The SH2 domain mediates interaction with tyrosine-phosphorylated proteins (By similarity). However, not involved in the binding to phosphorylated BCAR1 (By similarity). Required for cell cycle progression in response to INS/insulin (By similarity). Required for regulation of EGF-induced DNA synthesis (By similarity).</text>
</comment>
<comment type="domain">
    <text evidence="2">The Ras-GEF domain appears to adopt a closed conformation rendering it incapable of carrying out canonical exchange factor function, this closed conformation is probably required for interaction with BCAR1.</text>
</comment>
<comment type="PTM">
    <text evidence="3">Phosphorylated on tyrosine residues.</text>
</comment>
<comment type="caution">
    <text evidence="2 3">The guanine nucleotide exchange factor (GEF) activity is controversial. One study showed GEF activity towards RALA, RAP1A and RRAS (By similarity). However, in another study, a construct containing only the Ras-GEF domain lacks GEF activity towards RAP1 (By similarity).</text>
</comment>
<comment type="sequence caution" evidence="7">
    <conflict type="erroneous initiation">
        <sequence resource="EMBL-CDS" id="BAE00510"/>
    </conflict>
</comment>
<organism>
    <name type="scientific">Macaca fascicularis</name>
    <name type="common">Crab-eating macaque</name>
    <name type="synonym">Cynomolgus monkey</name>
    <dbReference type="NCBI Taxonomy" id="9541"/>
    <lineage>
        <taxon>Eukaryota</taxon>
        <taxon>Metazoa</taxon>
        <taxon>Chordata</taxon>
        <taxon>Craniata</taxon>
        <taxon>Vertebrata</taxon>
        <taxon>Euteleostomi</taxon>
        <taxon>Mammalia</taxon>
        <taxon>Eutheria</taxon>
        <taxon>Euarchontoglires</taxon>
        <taxon>Primates</taxon>
        <taxon>Haplorrhini</taxon>
        <taxon>Catarrhini</taxon>
        <taxon>Cercopithecidae</taxon>
        <taxon>Cercopithecinae</taxon>
        <taxon>Macaca</taxon>
    </lineage>
</organism>
<accession>Q4R8R1</accession>
<feature type="initiator methionine" description="Removed" evidence="2">
    <location>
        <position position="1"/>
    </location>
</feature>
<feature type="chain" id="PRO_0000230285" description="Breast cancer anti-estrogen resistance protein 3 homolog">
    <location>
        <begin position="2"/>
        <end position="825"/>
    </location>
</feature>
<feature type="domain" description="SH2" evidence="5">
    <location>
        <begin position="154"/>
        <end position="253"/>
    </location>
</feature>
<feature type="domain" description="Ras-GEF" evidence="4">
    <location>
        <begin position="548"/>
        <end position="818"/>
    </location>
</feature>
<feature type="region of interest" description="Disordered" evidence="6">
    <location>
        <begin position="31"/>
        <end position="93"/>
    </location>
</feature>
<feature type="region of interest" description="Mediates the interaction with BCAR1/p130CAS" evidence="2">
    <location>
        <begin position="744"/>
        <end position="748"/>
    </location>
</feature>
<feature type="compositionally biased region" description="Polar residues" evidence="6">
    <location>
        <begin position="75"/>
        <end position="93"/>
    </location>
</feature>
<feature type="site" description="Required for interaction with NEDD9" evidence="3">
    <location>
        <position position="748"/>
    </location>
</feature>
<feature type="modified residue" description="N-acetylalanine" evidence="2">
    <location>
        <position position="2"/>
    </location>
</feature>
<feature type="modified residue" description="Phosphoserine" evidence="2">
    <location>
        <position position="32"/>
    </location>
</feature>
<feature type="modified residue" description="Phosphoserine" evidence="2">
    <location>
        <position position="78"/>
    </location>
</feature>
<feature type="modified residue" description="Phosphoserine" evidence="2">
    <location>
        <position position="83"/>
    </location>
</feature>
<feature type="modified residue" description="Phosphoserine" evidence="2">
    <location>
        <position position="182"/>
    </location>
</feature>
<feature type="modified residue" description="Phosphoserine" evidence="2">
    <location>
        <position position="290"/>
    </location>
</feature>
<feature type="modified residue" description="N6-methyllysine" evidence="2">
    <location>
        <position position="334"/>
    </location>
</feature>
<feature type="modified residue" description="Phosphoserine" evidence="2">
    <location>
        <position position="358"/>
    </location>
</feature>
<feature type="modified residue" description="Phosphoserine" evidence="2">
    <location>
        <position position="363"/>
    </location>
</feature>
<feature type="modified residue" description="Phosphoserine" evidence="2">
    <location>
        <position position="375"/>
    </location>
</feature>
<feature type="modified residue" description="Omega-N-methylarginine" evidence="2">
    <location>
        <position position="442"/>
    </location>
</feature>
<feature type="modified residue" description="Phosphoserine" evidence="3">
    <location>
        <position position="471"/>
    </location>
</feature>
<proteinExistence type="evidence at transcript level"/>